<sequence length="283" mass="32901">MKHSFSRFFGFGEKEEEPEIAEHDTNKEEILEIPVHAIVPNRFQPRTIFSDEKIKELAMTIHTHGIIQPIVVRHTEDEGQYELIAGERRWRAVQTLEWEKIPAIIKDFSDTETASVALIENLQREELSSIEEAHAYARLLELHDLTQEALAQRLGKGQSTIANKLRLLKLPEPVQDAIMEKKITERHARALIPLKQPEFQVTLLAEIIEKSLNVKQTEDRVVKMLEQNKQKPKPRRKAFSRDTRIAMNTIRQSLSMVEDSGVRLNTEEEEFEEYIQLTIRIPK</sequence>
<dbReference type="EMBL" id="CP000560">
    <property type="protein sequence ID" value="ABS76134.1"/>
    <property type="molecule type" value="Genomic_DNA"/>
</dbReference>
<dbReference type="RefSeq" id="WP_007409900.1">
    <property type="nucleotide sequence ID" value="NC_009725.2"/>
</dbReference>
<dbReference type="SMR" id="A7ZAV8"/>
<dbReference type="GeneID" id="93082943"/>
<dbReference type="KEGG" id="bay:RBAM_038090"/>
<dbReference type="HOGENOM" id="CLU_023853_0_1_9"/>
<dbReference type="Proteomes" id="UP000001120">
    <property type="component" value="Chromosome"/>
</dbReference>
<dbReference type="GO" id="GO:0005694">
    <property type="term" value="C:chromosome"/>
    <property type="evidence" value="ECO:0007669"/>
    <property type="project" value="TreeGrafter"/>
</dbReference>
<dbReference type="GO" id="GO:0005737">
    <property type="term" value="C:cytoplasm"/>
    <property type="evidence" value="ECO:0007669"/>
    <property type="project" value="UniProtKB-UniRule"/>
</dbReference>
<dbReference type="GO" id="GO:0009295">
    <property type="term" value="C:nucleoid"/>
    <property type="evidence" value="ECO:0007669"/>
    <property type="project" value="UniProtKB-SubCell"/>
</dbReference>
<dbReference type="GO" id="GO:0003677">
    <property type="term" value="F:DNA binding"/>
    <property type="evidence" value="ECO:0007669"/>
    <property type="project" value="UniProtKB-UniRule"/>
</dbReference>
<dbReference type="GO" id="GO:0007059">
    <property type="term" value="P:chromosome segregation"/>
    <property type="evidence" value="ECO:0007669"/>
    <property type="project" value="TreeGrafter"/>
</dbReference>
<dbReference type="GO" id="GO:0000917">
    <property type="term" value="P:division septum assembly"/>
    <property type="evidence" value="ECO:0007669"/>
    <property type="project" value="UniProtKB-KW"/>
</dbReference>
<dbReference type="GO" id="GO:0045881">
    <property type="term" value="P:positive regulation of sporulation resulting in formation of a cellular spore"/>
    <property type="evidence" value="ECO:0007669"/>
    <property type="project" value="TreeGrafter"/>
</dbReference>
<dbReference type="CDD" id="cd16393">
    <property type="entry name" value="SPO0J_N"/>
    <property type="match status" value="1"/>
</dbReference>
<dbReference type="FunFam" id="1.10.10.2830:FF:000001">
    <property type="entry name" value="Chromosome partitioning protein ParB"/>
    <property type="match status" value="1"/>
</dbReference>
<dbReference type="FunFam" id="3.90.1530.30:FF:000001">
    <property type="entry name" value="Chromosome partitioning protein ParB"/>
    <property type="match status" value="1"/>
</dbReference>
<dbReference type="Gene3D" id="1.10.10.2830">
    <property type="match status" value="1"/>
</dbReference>
<dbReference type="Gene3D" id="3.90.1530.30">
    <property type="match status" value="1"/>
</dbReference>
<dbReference type="HAMAP" id="MF_02015">
    <property type="entry name" value="ParB_Noc"/>
    <property type="match status" value="1"/>
</dbReference>
<dbReference type="InterPro" id="IPR050336">
    <property type="entry name" value="Chromosome_partition/occlusion"/>
</dbReference>
<dbReference type="InterPro" id="IPR041468">
    <property type="entry name" value="HTH_ParB/Spo0J"/>
</dbReference>
<dbReference type="InterPro" id="IPR023705">
    <property type="entry name" value="Nucleoid_occlusion_protein"/>
</dbReference>
<dbReference type="InterPro" id="IPR004437">
    <property type="entry name" value="ParB/RepB/Spo0J"/>
</dbReference>
<dbReference type="InterPro" id="IPR003115">
    <property type="entry name" value="ParB/Sulfiredoxin_dom"/>
</dbReference>
<dbReference type="InterPro" id="IPR036086">
    <property type="entry name" value="ParB/Sulfiredoxin_sf"/>
</dbReference>
<dbReference type="NCBIfam" id="TIGR04285">
    <property type="entry name" value="nucleoid_noc"/>
    <property type="match status" value="1"/>
</dbReference>
<dbReference type="NCBIfam" id="TIGR00180">
    <property type="entry name" value="parB_part"/>
    <property type="match status" value="1"/>
</dbReference>
<dbReference type="PANTHER" id="PTHR33375">
    <property type="entry name" value="CHROMOSOME-PARTITIONING PROTEIN PARB-RELATED"/>
    <property type="match status" value="1"/>
</dbReference>
<dbReference type="PANTHER" id="PTHR33375:SF8">
    <property type="entry name" value="NUCLEOID OCCLUSION PROTEIN"/>
    <property type="match status" value="1"/>
</dbReference>
<dbReference type="Pfam" id="PF17762">
    <property type="entry name" value="HTH_ParB"/>
    <property type="match status" value="1"/>
</dbReference>
<dbReference type="Pfam" id="PF02195">
    <property type="entry name" value="ParBc"/>
    <property type="match status" value="1"/>
</dbReference>
<dbReference type="SMART" id="SM00470">
    <property type="entry name" value="ParB"/>
    <property type="match status" value="1"/>
</dbReference>
<dbReference type="SUPFAM" id="SSF109709">
    <property type="entry name" value="KorB DNA-binding domain-like"/>
    <property type="match status" value="1"/>
</dbReference>
<dbReference type="SUPFAM" id="SSF110849">
    <property type="entry name" value="ParB/Sulfiredoxin"/>
    <property type="match status" value="1"/>
</dbReference>
<evidence type="ECO:0000255" key="1">
    <source>
        <dbReference type="HAMAP-Rule" id="MF_02015"/>
    </source>
</evidence>
<evidence type="ECO:0000256" key="2">
    <source>
        <dbReference type="SAM" id="MobiDB-lite"/>
    </source>
</evidence>
<organism>
    <name type="scientific">Bacillus velezensis (strain DSM 23117 / BGSC 10A6 / LMG 26770 / FZB42)</name>
    <name type="common">Bacillus amyloliquefaciens subsp. plantarum</name>
    <dbReference type="NCBI Taxonomy" id="326423"/>
    <lineage>
        <taxon>Bacteria</taxon>
        <taxon>Bacillati</taxon>
        <taxon>Bacillota</taxon>
        <taxon>Bacilli</taxon>
        <taxon>Bacillales</taxon>
        <taxon>Bacillaceae</taxon>
        <taxon>Bacillus</taxon>
        <taxon>Bacillus amyloliquefaciens group</taxon>
    </lineage>
</organism>
<proteinExistence type="inferred from homology"/>
<accession>A7ZAV8</accession>
<gene>
    <name evidence="1" type="primary">noc</name>
    <name type="ordered locus">RBAM_038090</name>
</gene>
<comment type="function">
    <text evidence="1">Effects nucleoid occlusion by binding relatively nonspecifically to DNA and preventing the assembly of the division machinery in the vicinity of the nucleoid, especially under conditions that disturb the cell cycle. It helps to coordinate cell division and chromosome segregation by preventing the formation of the Z ring through the nucleoid, which would cause chromosome breakage.</text>
</comment>
<comment type="subcellular location">
    <subcellularLocation>
        <location evidence="1">Cytoplasm</location>
        <location evidence="1">Nucleoid</location>
    </subcellularLocation>
</comment>
<comment type="similarity">
    <text evidence="1">Belongs to the ParB family.</text>
</comment>
<name>NOC_BACVZ</name>
<feature type="chain" id="PRO_0000346616" description="Nucleoid occlusion protein">
    <location>
        <begin position="1"/>
        <end position="283"/>
    </location>
</feature>
<feature type="DNA-binding region" description="H-T-H motif" evidence="1">
    <location>
        <begin position="148"/>
        <end position="167"/>
    </location>
</feature>
<feature type="region of interest" description="Disordered" evidence="2">
    <location>
        <begin position="1"/>
        <end position="21"/>
    </location>
</feature>
<keyword id="KW-0131">Cell cycle</keyword>
<keyword id="KW-0132">Cell division</keyword>
<keyword id="KW-0963">Cytoplasm</keyword>
<keyword id="KW-0238">DNA-binding</keyword>
<keyword id="KW-0717">Septation</keyword>
<protein>
    <recommendedName>
        <fullName evidence="1">Nucleoid occlusion protein</fullName>
        <shortName evidence="1">Noc</shortName>
    </recommendedName>
</protein>
<reference key="1">
    <citation type="journal article" date="2007" name="Nat. Biotechnol.">
        <title>Comparative analysis of the complete genome sequence of the plant growth-promoting bacterium Bacillus amyloliquefaciens FZB42.</title>
        <authorList>
            <person name="Chen X.H."/>
            <person name="Koumoutsi A."/>
            <person name="Scholz R."/>
            <person name="Eisenreich A."/>
            <person name="Schneider K."/>
            <person name="Heinemeyer I."/>
            <person name="Morgenstern B."/>
            <person name="Voss B."/>
            <person name="Hess W.R."/>
            <person name="Reva O."/>
            <person name="Junge H."/>
            <person name="Voigt B."/>
            <person name="Jungblut P.R."/>
            <person name="Vater J."/>
            <person name="Suessmuth R."/>
            <person name="Liesegang H."/>
            <person name="Strittmatter A."/>
            <person name="Gottschalk G."/>
            <person name="Borriss R."/>
        </authorList>
    </citation>
    <scope>NUCLEOTIDE SEQUENCE [LARGE SCALE GENOMIC DNA]</scope>
    <source>
        <strain>DSM 23117 / BGSC 10A6 / LMG 26770 / FZB42</strain>
    </source>
</reference>